<proteinExistence type="inferred from homology"/>
<accession>Q57TE8</accession>
<gene>
    <name evidence="1" type="primary">leuC1</name>
    <name type="ordered locus">SCH_0107</name>
</gene>
<dbReference type="EC" id="4.2.1.33" evidence="1"/>
<dbReference type="EMBL" id="AE017220">
    <property type="protein sequence ID" value="AAX64013.1"/>
    <property type="molecule type" value="Genomic_DNA"/>
</dbReference>
<dbReference type="SMR" id="Q57TE8"/>
<dbReference type="KEGG" id="sec:SCH_0107"/>
<dbReference type="HOGENOM" id="CLU_006714_3_4_6"/>
<dbReference type="UniPathway" id="UPA00048">
    <property type="reaction ID" value="UER00071"/>
</dbReference>
<dbReference type="Proteomes" id="UP000000538">
    <property type="component" value="Chromosome"/>
</dbReference>
<dbReference type="GO" id="GO:0003861">
    <property type="term" value="F:3-isopropylmalate dehydratase activity"/>
    <property type="evidence" value="ECO:0007669"/>
    <property type="project" value="UniProtKB-UniRule"/>
</dbReference>
<dbReference type="GO" id="GO:0051539">
    <property type="term" value="F:4 iron, 4 sulfur cluster binding"/>
    <property type="evidence" value="ECO:0007669"/>
    <property type="project" value="UniProtKB-KW"/>
</dbReference>
<dbReference type="GO" id="GO:0046872">
    <property type="term" value="F:metal ion binding"/>
    <property type="evidence" value="ECO:0007669"/>
    <property type="project" value="UniProtKB-KW"/>
</dbReference>
<dbReference type="GO" id="GO:0009098">
    <property type="term" value="P:L-leucine biosynthetic process"/>
    <property type="evidence" value="ECO:0007669"/>
    <property type="project" value="UniProtKB-UniRule"/>
</dbReference>
<dbReference type="CDD" id="cd01583">
    <property type="entry name" value="IPMI"/>
    <property type="match status" value="1"/>
</dbReference>
<dbReference type="FunFam" id="3.30.499.10:FF:000006">
    <property type="entry name" value="3-isopropylmalate dehydratase large subunit"/>
    <property type="match status" value="1"/>
</dbReference>
<dbReference type="FunFam" id="3.30.499.10:FF:000007">
    <property type="entry name" value="3-isopropylmalate dehydratase large subunit"/>
    <property type="match status" value="1"/>
</dbReference>
<dbReference type="Gene3D" id="3.30.499.10">
    <property type="entry name" value="Aconitase, domain 3"/>
    <property type="match status" value="2"/>
</dbReference>
<dbReference type="HAMAP" id="MF_01026">
    <property type="entry name" value="LeuC_type1"/>
    <property type="match status" value="1"/>
</dbReference>
<dbReference type="InterPro" id="IPR004430">
    <property type="entry name" value="3-IsopropMal_deHydase_lsu"/>
</dbReference>
<dbReference type="InterPro" id="IPR015931">
    <property type="entry name" value="Acnase/IPM_dHydase_lsu_aba_1/3"/>
</dbReference>
<dbReference type="InterPro" id="IPR001030">
    <property type="entry name" value="Acoase/IPM_deHydtase_lsu_aba"/>
</dbReference>
<dbReference type="InterPro" id="IPR018136">
    <property type="entry name" value="Aconitase_4Fe-4S_BS"/>
</dbReference>
<dbReference type="InterPro" id="IPR036008">
    <property type="entry name" value="Aconitase_4Fe-4S_dom"/>
</dbReference>
<dbReference type="InterPro" id="IPR050067">
    <property type="entry name" value="IPM_dehydratase_rel_enz"/>
</dbReference>
<dbReference type="InterPro" id="IPR033941">
    <property type="entry name" value="IPMI_cat"/>
</dbReference>
<dbReference type="NCBIfam" id="TIGR00170">
    <property type="entry name" value="leuC"/>
    <property type="match status" value="1"/>
</dbReference>
<dbReference type="NCBIfam" id="NF004016">
    <property type="entry name" value="PRK05478.1"/>
    <property type="match status" value="1"/>
</dbReference>
<dbReference type="NCBIfam" id="NF009116">
    <property type="entry name" value="PRK12466.1"/>
    <property type="match status" value="1"/>
</dbReference>
<dbReference type="PANTHER" id="PTHR43822:SF9">
    <property type="entry name" value="3-ISOPROPYLMALATE DEHYDRATASE"/>
    <property type="match status" value="1"/>
</dbReference>
<dbReference type="PANTHER" id="PTHR43822">
    <property type="entry name" value="HOMOACONITASE, MITOCHONDRIAL-RELATED"/>
    <property type="match status" value="1"/>
</dbReference>
<dbReference type="Pfam" id="PF00330">
    <property type="entry name" value="Aconitase"/>
    <property type="match status" value="1"/>
</dbReference>
<dbReference type="PRINTS" id="PR00415">
    <property type="entry name" value="ACONITASE"/>
</dbReference>
<dbReference type="SUPFAM" id="SSF53732">
    <property type="entry name" value="Aconitase iron-sulfur domain"/>
    <property type="match status" value="1"/>
</dbReference>
<dbReference type="PROSITE" id="PS00450">
    <property type="entry name" value="ACONITASE_1"/>
    <property type="match status" value="1"/>
</dbReference>
<dbReference type="PROSITE" id="PS01244">
    <property type="entry name" value="ACONITASE_2"/>
    <property type="match status" value="1"/>
</dbReference>
<name>LEUC1_SALCH</name>
<comment type="function">
    <text evidence="1">Catalyzes the isomerization between 2-isopropylmalate and 3-isopropylmalate, via the formation of 2-isopropylmaleate.</text>
</comment>
<comment type="catalytic activity">
    <reaction evidence="1">
        <text>(2R,3S)-3-isopropylmalate = (2S)-2-isopropylmalate</text>
        <dbReference type="Rhea" id="RHEA:32287"/>
        <dbReference type="ChEBI" id="CHEBI:1178"/>
        <dbReference type="ChEBI" id="CHEBI:35121"/>
        <dbReference type="EC" id="4.2.1.33"/>
    </reaction>
</comment>
<comment type="cofactor">
    <cofactor evidence="1">
        <name>[4Fe-4S] cluster</name>
        <dbReference type="ChEBI" id="CHEBI:49883"/>
    </cofactor>
    <text evidence="1">Binds 1 [4Fe-4S] cluster per subunit.</text>
</comment>
<comment type="pathway">
    <text evidence="1">Amino-acid biosynthesis; L-leucine biosynthesis; L-leucine from 3-methyl-2-oxobutanoate: step 2/4.</text>
</comment>
<comment type="subunit">
    <text evidence="1">Heterodimer of LeuC and LeuD.</text>
</comment>
<comment type="similarity">
    <text evidence="1">Belongs to the aconitase/IPM isomerase family. LeuC type 1 subfamily.</text>
</comment>
<reference key="1">
    <citation type="journal article" date="2005" name="Nucleic Acids Res.">
        <title>The genome sequence of Salmonella enterica serovar Choleraesuis, a highly invasive and resistant zoonotic pathogen.</title>
        <authorList>
            <person name="Chiu C.-H."/>
            <person name="Tang P."/>
            <person name="Chu C."/>
            <person name="Hu S."/>
            <person name="Bao Q."/>
            <person name="Yu J."/>
            <person name="Chou Y.-Y."/>
            <person name="Wang H.-S."/>
            <person name="Lee Y.-S."/>
        </authorList>
    </citation>
    <scope>NUCLEOTIDE SEQUENCE [LARGE SCALE GENOMIC DNA]</scope>
    <source>
        <strain>SC-B67</strain>
    </source>
</reference>
<keyword id="KW-0004">4Fe-4S</keyword>
<keyword id="KW-0028">Amino-acid biosynthesis</keyword>
<keyword id="KW-0100">Branched-chain amino acid biosynthesis</keyword>
<keyword id="KW-0408">Iron</keyword>
<keyword id="KW-0411">Iron-sulfur</keyword>
<keyword id="KW-0432">Leucine biosynthesis</keyword>
<keyword id="KW-0456">Lyase</keyword>
<keyword id="KW-0479">Metal-binding</keyword>
<sequence>MAKTLYEKLFDAHVVFEAPNETPLLYIDRHLVHEVTSPQAFDGLRAHHRPVRQPGKTFATMDHNVSTQTKDINASGEMARIQMQELIKNCNEFGVELYDLNHPYQGIVHVMGPEQGVTLPGMTIVCGDSHTATHGAFGALAFGIGTSEVEHVLATQTLKQGRAKTMKIEVTGNAAPGITAKDIVLAIIGKTGSAGGTGHVVEFCGDAIRALSMEGRMTLCNMAIEMGAKAGLVAPDETTFNYVKGRLHAPKGRDFDEAVEYWKTLKTDDGATFDTVVTLRAEEIAPQVTWGTNPGQVISVTDIIPDPASFSDPVERASAEKALAYMGLQPGVPLTDVAIDKVFIGSCTNSRIEDLRAAAEVAKGRKVAPGVQALVVPGSGPVKAQAEAEGLDKIFIEAGFEWRLPGCSMCLAMNNDRLNPGERCASTSNRNFEGRQGRGGRTHLVSPAMAAAAAVTGHFADIRSIK</sequence>
<evidence type="ECO:0000255" key="1">
    <source>
        <dbReference type="HAMAP-Rule" id="MF_01026"/>
    </source>
</evidence>
<feature type="chain" id="PRO_0000076799" description="3-isopropylmalate dehydratase large subunit 1">
    <location>
        <begin position="1"/>
        <end position="466"/>
    </location>
</feature>
<feature type="binding site" evidence="1">
    <location>
        <position position="347"/>
    </location>
    <ligand>
        <name>[4Fe-4S] cluster</name>
        <dbReference type="ChEBI" id="CHEBI:49883"/>
    </ligand>
</feature>
<feature type="binding site" evidence="1">
    <location>
        <position position="407"/>
    </location>
    <ligand>
        <name>[4Fe-4S] cluster</name>
        <dbReference type="ChEBI" id="CHEBI:49883"/>
    </ligand>
</feature>
<feature type="binding site" evidence="1">
    <location>
        <position position="410"/>
    </location>
    <ligand>
        <name>[4Fe-4S] cluster</name>
        <dbReference type="ChEBI" id="CHEBI:49883"/>
    </ligand>
</feature>
<protein>
    <recommendedName>
        <fullName evidence="1">3-isopropylmalate dehydratase large subunit 1</fullName>
        <ecNumber evidence="1">4.2.1.33</ecNumber>
    </recommendedName>
    <alternativeName>
        <fullName evidence="1">Alpha-IPM isomerase 1</fullName>
        <shortName evidence="1">IPMI 1</shortName>
    </alternativeName>
    <alternativeName>
        <fullName evidence="1">Isopropylmalate isomerase 1</fullName>
    </alternativeName>
</protein>
<organism>
    <name type="scientific">Salmonella choleraesuis (strain SC-B67)</name>
    <dbReference type="NCBI Taxonomy" id="321314"/>
    <lineage>
        <taxon>Bacteria</taxon>
        <taxon>Pseudomonadati</taxon>
        <taxon>Pseudomonadota</taxon>
        <taxon>Gammaproteobacteria</taxon>
        <taxon>Enterobacterales</taxon>
        <taxon>Enterobacteriaceae</taxon>
        <taxon>Salmonella</taxon>
    </lineage>
</organism>